<dbReference type="EC" id="3.5.4.-"/>
<dbReference type="EMBL" id="AB074455">
    <property type="protein sequence ID" value="BAB72086.1"/>
    <property type="molecule type" value="mRNA"/>
</dbReference>
<dbReference type="RefSeq" id="NP_001306289.1">
    <property type="nucleotide sequence ID" value="NM_001319360.1"/>
</dbReference>
<dbReference type="SMR" id="Q8WP22"/>
<dbReference type="eggNOG" id="ENOG502QQXT">
    <property type="taxonomic scope" value="Eukaryota"/>
</dbReference>
<dbReference type="Proteomes" id="UP000233100">
    <property type="component" value="Unplaced"/>
</dbReference>
<dbReference type="GO" id="GO:0016787">
    <property type="term" value="F:hydrolase activity"/>
    <property type="evidence" value="ECO:0007669"/>
    <property type="project" value="UniProtKB-KW"/>
</dbReference>
<dbReference type="GO" id="GO:0046872">
    <property type="term" value="F:metal ion binding"/>
    <property type="evidence" value="ECO:0007669"/>
    <property type="project" value="UniProtKB-KW"/>
</dbReference>
<dbReference type="GO" id="GO:0006397">
    <property type="term" value="P:mRNA processing"/>
    <property type="evidence" value="ECO:0007669"/>
    <property type="project" value="UniProtKB-KW"/>
</dbReference>
<dbReference type="Gene3D" id="3.40.140.10">
    <property type="entry name" value="Cytidine Deaminase, domain 2"/>
    <property type="match status" value="1"/>
</dbReference>
<dbReference type="InterPro" id="IPR038953">
    <property type="entry name" value="APOBEC4"/>
</dbReference>
<dbReference type="InterPro" id="IPR002125">
    <property type="entry name" value="CMP_dCMP_dom"/>
</dbReference>
<dbReference type="PANTHER" id="PTHR35672">
    <property type="entry name" value="C-U-EDITING ENZYME APOBEC-4-RELATED"/>
    <property type="match status" value="1"/>
</dbReference>
<dbReference type="PANTHER" id="PTHR35672:SF1">
    <property type="entry name" value="C-U-EDITING ENZYME APOBEC-4-RELATED"/>
    <property type="match status" value="1"/>
</dbReference>
<dbReference type="Pfam" id="PF18778">
    <property type="entry name" value="NAD1"/>
    <property type="match status" value="1"/>
</dbReference>
<dbReference type="PROSITE" id="PS51747">
    <property type="entry name" value="CYT_DCMP_DEAMINASES_2"/>
    <property type="match status" value="1"/>
</dbReference>
<proteinExistence type="evidence at transcript level"/>
<protein>
    <recommendedName>
        <fullName>Putative C-&gt;U-editing enzyme APOBEC-4</fullName>
        <ecNumber>3.5.4.-</ecNumber>
    </recommendedName>
    <alternativeName>
        <fullName>Apolipoprotein B mRNA-editing enzyme catalytic polypeptide-like 4</fullName>
    </alternativeName>
</protein>
<evidence type="ECO:0000250" key="1"/>
<evidence type="ECO:0000255" key="2">
    <source>
        <dbReference type="PROSITE-ProRule" id="PRU01083"/>
    </source>
</evidence>
<evidence type="ECO:0000305" key="3"/>
<keyword id="KW-0378">Hydrolase</keyword>
<keyword id="KW-0479">Metal-binding</keyword>
<keyword id="KW-0507">mRNA processing</keyword>
<keyword id="KW-1185">Reference proteome</keyword>
<keyword id="KW-0862">Zinc</keyword>
<feature type="chain" id="PRO_0000239356" description="Putative C-&gt;U-editing enzyme APOBEC-4">
    <location>
        <begin position="1"/>
        <end position="363"/>
    </location>
</feature>
<feature type="domain" description="CMP/dCMP-type deaminase" evidence="2">
    <location>
        <begin position="61"/>
        <end position="177"/>
    </location>
</feature>
<feature type="active site" description="Proton donor" evidence="1">
    <location>
        <position position="95"/>
    </location>
</feature>
<feature type="binding site" evidence="1">
    <location>
        <position position="93"/>
    </location>
    <ligand>
        <name>Zn(2+)</name>
        <dbReference type="ChEBI" id="CHEBI:29105"/>
        <note>catalytic</note>
    </ligand>
</feature>
<feature type="binding site" evidence="1">
    <location>
        <position position="127"/>
    </location>
    <ligand>
        <name>Zn(2+)</name>
        <dbReference type="ChEBI" id="CHEBI:29105"/>
        <note>catalytic</note>
    </ligand>
</feature>
<feature type="binding site" evidence="1">
    <location>
        <position position="134"/>
    </location>
    <ligand>
        <name>Zn(2+)</name>
        <dbReference type="ChEBI" id="CHEBI:29105"/>
        <note>catalytic</note>
    </ligand>
</feature>
<comment type="function">
    <text evidence="1">Putative C to U editing enzyme whose physiological substrate is not yet known.</text>
</comment>
<comment type="cofactor">
    <cofactor evidence="1">
        <name>Zn(2+)</name>
        <dbReference type="ChEBI" id="CHEBI:29105"/>
    </cofactor>
</comment>
<comment type="similarity">
    <text evidence="3">Belongs to the cytidine and deoxycytidylate deaminase family.</text>
</comment>
<sequence>MEPTYEEYLANHGTIVKPYYWLSFSLDCSNCPYHIRTGEEARVSLTEFCQIFGFPYGTTYPQTKHLTFYELKTSSGSLVQKGHASSCTGNYIHPESMLFEMNGYLDSAIYNNDSIRHIILYCNNSPCNEANHCCISKVYNFLITYPGITLSIYFSQLYHTEMDFPASAWNREALRSLASLWPRVVLSPISGGIWHSVLHSFVSGVSGSHVFQPILTGRALTDRYNAYEINAITGVKPFFTDVLLHTKRNPNTKAQMALESYPLNNAFPGQSFQMTSGIPPDLRAPVVFVLLPLRDLPPMHMGQDPNKPRNIIRHLNMPQMSFQETKDLERLPTRRSVETVEITERFASSKQAEEKTKKKKGKK</sequence>
<accession>Q8WP22</accession>
<gene>
    <name type="primary">APOBEC4</name>
    <name type="ORF">QtsA-21565</name>
</gene>
<reference key="1">
    <citation type="journal article" date="2002" name="BMC Genomics">
        <title>Cynomolgus monkey testicular cDNAs for discovery of novel human genes in the human genome sequence.</title>
        <authorList>
            <person name="Osada N."/>
            <person name="Hida M."/>
            <person name="Kusuda J."/>
            <person name="Tanuma R."/>
            <person name="Hirata M."/>
            <person name="Suto Y."/>
            <person name="Hirai M."/>
            <person name="Terao K."/>
            <person name="Sugano S."/>
            <person name="Hashimoto K."/>
        </authorList>
    </citation>
    <scope>NUCLEOTIDE SEQUENCE [LARGE SCALE MRNA]</scope>
    <source>
        <tissue>Testis</tissue>
    </source>
</reference>
<organism>
    <name type="scientific">Macaca fascicularis</name>
    <name type="common">Crab-eating macaque</name>
    <name type="synonym">Cynomolgus monkey</name>
    <dbReference type="NCBI Taxonomy" id="9541"/>
    <lineage>
        <taxon>Eukaryota</taxon>
        <taxon>Metazoa</taxon>
        <taxon>Chordata</taxon>
        <taxon>Craniata</taxon>
        <taxon>Vertebrata</taxon>
        <taxon>Euteleostomi</taxon>
        <taxon>Mammalia</taxon>
        <taxon>Eutheria</taxon>
        <taxon>Euarchontoglires</taxon>
        <taxon>Primates</taxon>
        <taxon>Haplorrhini</taxon>
        <taxon>Catarrhini</taxon>
        <taxon>Cercopithecidae</taxon>
        <taxon>Cercopithecinae</taxon>
        <taxon>Macaca</taxon>
    </lineage>
</organism>
<name>ABEC4_MACFA</name>